<evidence type="ECO:0000255" key="1">
    <source>
        <dbReference type="HAMAP-Rule" id="MF_01318"/>
    </source>
</evidence>
<evidence type="ECO:0000305" key="2"/>
<name>RL1_SHESR</name>
<gene>
    <name evidence="1" type="primary">rplA</name>
    <name type="ordered locus">Shewmr7_0184</name>
</gene>
<reference key="1">
    <citation type="submission" date="2006-08" db="EMBL/GenBank/DDBJ databases">
        <title>Complete sequence of chromosome 1 of Shewanella sp. MR-7.</title>
        <authorList>
            <person name="Copeland A."/>
            <person name="Lucas S."/>
            <person name="Lapidus A."/>
            <person name="Barry K."/>
            <person name="Detter J.C."/>
            <person name="Glavina del Rio T."/>
            <person name="Hammon N."/>
            <person name="Israni S."/>
            <person name="Dalin E."/>
            <person name="Tice H."/>
            <person name="Pitluck S."/>
            <person name="Kiss H."/>
            <person name="Brettin T."/>
            <person name="Bruce D."/>
            <person name="Han C."/>
            <person name="Tapia R."/>
            <person name="Gilna P."/>
            <person name="Schmutz J."/>
            <person name="Larimer F."/>
            <person name="Land M."/>
            <person name="Hauser L."/>
            <person name="Kyrpides N."/>
            <person name="Mikhailova N."/>
            <person name="Nealson K."/>
            <person name="Konstantinidis K."/>
            <person name="Klappenbach J."/>
            <person name="Tiedje J."/>
            <person name="Richardson P."/>
        </authorList>
    </citation>
    <scope>NUCLEOTIDE SEQUENCE [LARGE SCALE GENOMIC DNA]</scope>
    <source>
        <strain>MR-7</strain>
    </source>
</reference>
<organism>
    <name type="scientific">Shewanella sp. (strain MR-7)</name>
    <dbReference type="NCBI Taxonomy" id="60481"/>
    <lineage>
        <taxon>Bacteria</taxon>
        <taxon>Pseudomonadati</taxon>
        <taxon>Pseudomonadota</taxon>
        <taxon>Gammaproteobacteria</taxon>
        <taxon>Alteromonadales</taxon>
        <taxon>Shewanellaceae</taxon>
        <taxon>Shewanella</taxon>
    </lineage>
</organism>
<accession>Q0I0B5</accession>
<feature type="chain" id="PRO_0000308104" description="Large ribosomal subunit protein uL1">
    <location>
        <begin position="1"/>
        <end position="233"/>
    </location>
</feature>
<sequence>MAKLTKRMRVIREKVDGTKLYEINDAVALLKELATAKFVESVDVAVNLGIDPRKSDQNVRGATVLPHGTGRDVRVAVFTQGANAEAAKAAGAELVGMDDLAEQIKAGEMNFDVVIASPDAMRVVGMLGQILGPRGLMPNPKTGTVTPNVAEAVKNAKAGQVRYRNDKNGIIHTTIGKVDFTPVQLKENLEALISALKKAKPAVAKGVYVKKVSISTTMGAGVAIDQATLETAN</sequence>
<keyword id="KW-0678">Repressor</keyword>
<keyword id="KW-0687">Ribonucleoprotein</keyword>
<keyword id="KW-0689">Ribosomal protein</keyword>
<keyword id="KW-0694">RNA-binding</keyword>
<keyword id="KW-0699">rRNA-binding</keyword>
<keyword id="KW-0810">Translation regulation</keyword>
<keyword id="KW-0820">tRNA-binding</keyword>
<protein>
    <recommendedName>
        <fullName evidence="1">Large ribosomal subunit protein uL1</fullName>
    </recommendedName>
    <alternativeName>
        <fullName evidence="2">50S ribosomal protein L1</fullName>
    </alternativeName>
</protein>
<comment type="function">
    <text evidence="1">Binds directly to 23S rRNA. The L1 stalk is quite mobile in the ribosome, and is involved in E site tRNA release.</text>
</comment>
<comment type="function">
    <text evidence="1">Protein L1 is also a translational repressor protein, it controls the translation of the L11 operon by binding to its mRNA.</text>
</comment>
<comment type="subunit">
    <text evidence="1">Part of the 50S ribosomal subunit.</text>
</comment>
<comment type="similarity">
    <text evidence="1">Belongs to the universal ribosomal protein uL1 family.</text>
</comment>
<proteinExistence type="inferred from homology"/>
<dbReference type="EMBL" id="CP000444">
    <property type="protein sequence ID" value="ABI41190.1"/>
    <property type="molecule type" value="Genomic_DNA"/>
</dbReference>
<dbReference type="SMR" id="Q0I0B5"/>
<dbReference type="KEGG" id="shm:Shewmr7_0184"/>
<dbReference type="HOGENOM" id="CLU_062853_0_0_6"/>
<dbReference type="GO" id="GO:0022625">
    <property type="term" value="C:cytosolic large ribosomal subunit"/>
    <property type="evidence" value="ECO:0007669"/>
    <property type="project" value="TreeGrafter"/>
</dbReference>
<dbReference type="GO" id="GO:0019843">
    <property type="term" value="F:rRNA binding"/>
    <property type="evidence" value="ECO:0007669"/>
    <property type="project" value="UniProtKB-UniRule"/>
</dbReference>
<dbReference type="GO" id="GO:0003735">
    <property type="term" value="F:structural constituent of ribosome"/>
    <property type="evidence" value="ECO:0007669"/>
    <property type="project" value="InterPro"/>
</dbReference>
<dbReference type="GO" id="GO:0000049">
    <property type="term" value="F:tRNA binding"/>
    <property type="evidence" value="ECO:0007669"/>
    <property type="project" value="UniProtKB-KW"/>
</dbReference>
<dbReference type="GO" id="GO:0006417">
    <property type="term" value="P:regulation of translation"/>
    <property type="evidence" value="ECO:0007669"/>
    <property type="project" value="UniProtKB-KW"/>
</dbReference>
<dbReference type="GO" id="GO:0006412">
    <property type="term" value="P:translation"/>
    <property type="evidence" value="ECO:0007669"/>
    <property type="project" value="UniProtKB-UniRule"/>
</dbReference>
<dbReference type="CDD" id="cd00403">
    <property type="entry name" value="Ribosomal_L1"/>
    <property type="match status" value="1"/>
</dbReference>
<dbReference type="FunFam" id="3.40.50.790:FF:000001">
    <property type="entry name" value="50S ribosomal protein L1"/>
    <property type="match status" value="1"/>
</dbReference>
<dbReference type="Gene3D" id="3.30.190.20">
    <property type="match status" value="1"/>
</dbReference>
<dbReference type="Gene3D" id="3.40.50.790">
    <property type="match status" value="1"/>
</dbReference>
<dbReference type="HAMAP" id="MF_01318_B">
    <property type="entry name" value="Ribosomal_uL1_B"/>
    <property type="match status" value="1"/>
</dbReference>
<dbReference type="InterPro" id="IPR005878">
    <property type="entry name" value="Ribosom_uL1_bac-type"/>
</dbReference>
<dbReference type="InterPro" id="IPR002143">
    <property type="entry name" value="Ribosomal_uL1"/>
</dbReference>
<dbReference type="InterPro" id="IPR023674">
    <property type="entry name" value="Ribosomal_uL1-like"/>
</dbReference>
<dbReference type="InterPro" id="IPR028364">
    <property type="entry name" value="Ribosomal_uL1/biogenesis"/>
</dbReference>
<dbReference type="InterPro" id="IPR016095">
    <property type="entry name" value="Ribosomal_uL1_3-a/b-sand"/>
</dbReference>
<dbReference type="InterPro" id="IPR023673">
    <property type="entry name" value="Ribosomal_uL1_CS"/>
</dbReference>
<dbReference type="NCBIfam" id="TIGR01169">
    <property type="entry name" value="rplA_bact"/>
    <property type="match status" value="1"/>
</dbReference>
<dbReference type="PANTHER" id="PTHR36427">
    <property type="entry name" value="54S RIBOSOMAL PROTEIN L1, MITOCHONDRIAL"/>
    <property type="match status" value="1"/>
</dbReference>
<dbReference type="PANTHER" id="PTHR36427:SF3">
    <property type="entry name" value="LARGE RIBOSOMAL SUBUNIT PROTEIN UL1M"/>
    <property type="match status" value="1"/>
</dbReference>
<dbReference type="Pfam" id="PF00687">
    <property type="entry name" value="Ribosomal_L1"/>
    <property type="match status" value="1"/>
</dbReference>
<dbReference type="PIRSF" id="PIRSF002155">
    <property type="entry name" value="Ribosomal_L1"/>
    <property type="match status" value="1"/>
</dbReference>
<dbReference type="SUPFAM" id="SSF56808">
    <property type="entry name" value="Ribosomal protein L1"/>
    <property type="match status" value="1"/>
</dbReference>
<dbReference type="PROSITE" id="PS01199">
    <property type="entry name" value="RIBOSOMAL_L1"/>
    <property type="match status" value="1"/>
</dbReference>